<protein>
    <recommendedName>
        <fullName evidence="1">DNA-binding protein Fis</fullName>
    </recommendedName>
</protein>
<organism>
    <name type="scientific">Yersinia enterocolitica serotype O:8 / biotype 1B (strain NCTC 13174 / 8081)</name>
    <dbReference type="NCBI Taxonomy" id="393305"/>
    <lineage>
        <taxon>Bacteria</taxon>
        <taxon>Pseudomonadati</taxon>
        <taxon>Pseudomonadota</taxon>
        <taxon>Gammaproteobacteria</taxon>
        <taxon>Enterobacterales</taxon>
        <taxon>Yersiniaceae</taxon>
        <taxon>Yersinia</taxon>
    </lineage>
</organism>
<feature type="chain" id="PRO_1000023351" description="DNA-binding protein Fis">
    <location>
        <begin position="1"/>
        <end position="98"/>
    </location>
</feature>
<feature type="DNA-binding region" description="H-T-H motif" evidence="1">
    <location>
        <begin position="74"/>
        <end position="93"/>
    </location>
</feature>
<comment type="function">
    <text evidence="1">Activates ribosomal RNA transcription. Plays a direct role in upstream activation of rRNA promoters.</text>
</comment>
<comment type="subunit">
    <text evidence="1">Homodimer.</text>
</comment>
<comment type="similarity">
    <text evidence="1">Belongs to the transcriptional regulatory Fis family.</text>
</comment>
<keyword id="KW-0010">Activator</keyword>
<keyword id="KW-0238">DNA-binding</keyword>
<keyword id="KW-0804">Transcription</keyword>
<keyword id="KW-0805">Transcription regulation</keyword>
<evidence type="ECO:0000255" key="1">
    <source>
        <dbReference type="HAMAP-Rule" id="MF_00166"/>
    </source>
</evidence>
<dbReference type="EMBL" id="AM286415">
    <property type="protein sequence ID" value="CAL13841.1"/>
    <property type="molecule type" value="Genomic_DNA"/>
</dbReference>
<dbReference type="RefSeq" id="WP_002210061.1">
    <property type="nucleotide sequence ID" value="NC_008800.1"/>
</dbReference>
<dbReference type="RefSeq" id="YP_001007968.1">
    <property type="nucleotide sequence ID" value="NC_008800.1"/>
</dbReference>
<dbReference type="SMR" id="A1JRL7"/>
<dbReference type="GeneID" id="97454355"/>
<dbReference type="KEGG" id="yen:YE3817"/>
<dbReference type="PATRIC" id="fig|393305.7.peg.4064"/>
<dbReference type="eggNOG" id="COG2901">
    <property type="taxonomic scope" value="Bacteria"/>
</dbReference>
<dbReference type="HOGENOM" id="CLU_158040_3_0_6"/>
<dbReference type="OrthoDB" id="9802388at2"/>
<dbReference type="PRO" id="PR:A1JRL7"/>
<dbReference type="Proteomes" id="UP000000642">
    <property type="component" value="Chromosome"/>
</dbReference>
<dbReference type="GO" id="GO:0003700">
    <property type="term" value="F:DNA-binding transcription factor activity"/>
    <property type="evidence" value="ECO:0007669"/>
    <property type="project" value="UniProtKB-UniRule"/>
</dbReference>
<dbReference type="GO" id="GO:0043565">
    <property type="term" value="F:sequence-specific DNA binding"/>
    <property type="evidence" value="ECO:0007669"/>
    <property type="project" value="InterPro"/>
</dbReference>
<dbReference type="FunFam" id="1.10.10.60:FF:000006">
    <property type="entry name" value="DNA-binding protein Fis"/>
    <property type="match status" value="1"/>
</dbReference>
<dbReference type="Gene3D" id="1.10.10.60">
    <property type="entry name" value="Homeodomain-like"/>
    <property type="match status" value="1"/>
</dbReference>
<dbReference type="HAMAP" id="MF_00166">
    <property type="entry name" value="DNA_binding_Fis"/>
    <property type="match status" value="1"/>
</dbReference>
<dbReference type="InterPro" id="IPR005412">
    <property type="entry name" value="Fis_DNA-bd"/>
</dbReference>
<dbReference type="InterPro" id="IPR009057">
    <property type="entry name" value="Homeodomain-like_sf"/>
</dbReference>
<dbReference type="InterPro" id="IPR002197">
    <property type="entry name" value="HTH_Fis"/>
</dbReference>
<dbReference type="InterPro" id="IPR050207">
    <property type="entry name" value="Trans_regulatory_Fis"/>
</dbReference>
<dbReference type="NCBIfam" id="NF001659">
    <property type="entry name" value="PRK00430.1"/>
    <property type="match status" value="1"/>
</dbReference>
<dbReference type="PANTHER" id="PTHR47918">
    <property type="entry name" value="DNA-BINDING PROTEIN FIS"/>
    <property type="match status" value="1"/>
</dbReference>
<dbReference type="PANTHER" id="PTHR47918:SF1">
    <property type="entry name" value="DNA-BINDING PROTEIN FIS"/>
    <property type="match status" value="1"/>
</dbReference>
<dbReference type="Pfam" id="PF02954">
    <property type="entry name" value="HTH_8"/>
    <property type="match status" value="1"/>
</dbReference>
<dbReference type="PIRSF" id="PIRSF002097">
    <property type="entry name" value="DNA-binding_Fis"/>
    <property type="match status" value="1"/>
</dbReference>
<dbReference type="PRINTS" id="PR01591">
    <property type="entry name" value="DNABINDNGFIS"/>
</dbReference>
<dbReference type="PRINTS" id="PR01590">
    <property type="entry name" value="HTHFIS"/>
</dbReference>
<dbReference type="SUPFAM" id="SSF46689">
    <property type="entry name" value="Homeodomain-like"/>
    <property type="match status" value="1"/>
</dbReference>
<sequence length="98" mass="11197">MFEQRVNSDVLTVATVNSQDQVTQKPLRDSVKQALKNYFAQLNGQDVSDLYELVLAEVEQPLLDMVMQYTRGNQTRAALMMGINRGTLRKKLKKYGMN</sequence>
<gene>
    <name evidence="1" type="primary">fis</name>
    <name type="ordered locus">YE3817</name>
</gene>
<name>FIS_YERE8</name>
<proteinExistence type="inferred from homology"/>
<accession>A1JRL7</accession>
<reference key="1">
    <citation type="journal article" date="2006" name="PLoS Genet.">
        <title>The complete genome sequence and comparative genome analysis of the high pathogenicity Yersinia enterocolitica strain 8081.</title>
        <authorList>
            <person name="Thomson N.R."/>
            <person name="Howard S."/>
            <person name="Wren B.W."/>
            <person name="Holden M.T.G."/>
            <person name="Crossman L."/>
            <person name="Challis G.L."/>
            <person name="Churcher C."/>
            <person name="Mungall K."/>
            <person name="Brooks K."/>
            <person name="Chillingworth T."/>
            <person name="Feltwell T."/>
            <person name="Abdellah Z."/>
            <person name="Hauser H."/>
            <person name="Jagels K."/>
            <person name="Maddison M."/>
            <person name="Moule S."/>
            <person name="Sanders M."/>
            <person name="Whitehead S."/>
            <person name="Quail M.A."/>
            <person name="Dougan G."/>
            <person name="Parkhill J."/>
            <person name="Prentice M.B."/>
        </authorList>
    </citation>
    <scope>NUCLEOTIDE SEQUENCE [LARGE SCALE GENOMIC DNA]</scope>
    <source>
        <strain>NCTC 13174 / 8081</strain>
    </source>
</reference>